<comment type="function">
    <text evidence="2 4">Catalyzes the hydrolytic deamination of adenosine and 2-deoxyadenosine.</text>
</comment>
<comment type="catalytic activity">
    <reaction evidence="2 3 4">
        <text>adenosine + H2O + H(+) = inosine + NH4(+)</text>
        <dbReference type="Rhea" id="RHEA:24408"/>
        <dbReference type="ChEBI" id="CHEBI:15377"/>
        <dbReference type="ChEBI" id="CHEBI:15378"/>
        <dbReference type="ChEBI" id="CHEBI:16335"/>
        <dbReference type="ChEBI" id="CHEBI:17596"/>
        <dbReference type="ChEBI" id="CHEBI:28938"/>
        <dbReference type="EC" id="3.5.4.4"/>
    </reaction>
    <physiologicalReaction direction="left-to-right" evidence="2 3 4">
        <dbReference type="Rhea" id="RHEA:24409"/>
    </physiologicalReaction>
</comment>
<comment type="catalytic activity">
    <reaction evidence="2 4">
        <text>2'-deoxyadenosine + H2O + H(+) = 2'-deoxyinosine + NH4(+)</text>
        <dbReference type="Rhea" id="RHEA:28190"/>
        <dbReference type="ChEBI" id="CHEBI:15377"/>
        <dbReference type="ChEBI" id="CHEBI:15378"/>
        <dbReference type="ChEBI" id="CHEBI:17256"/>
        <dbReference type="ChEBI" id="CHEBI:28938"/>
        <dbReference type="ChEBI" id="CHEBI:28997"/>
        <dbReference type="EC" id="3.5.4.4"/>
    </reaction>
    <physiologicalReaction direction="left-to-right" evidence="2 4">
        <dbReference type="Rhea" id="RHEA:28191"/>
    </physiologicalReaction>
</comment>
<comment type="cofactor">
    <cofactor evidence="2">
        <name>Zn(2+)</name>
        <dbReference type="ChEBI" id="CHEBI:29105"/>
    </cofactor>
    <text evidence="2">Binds 1 zinc ion per subunit.</text>
</comment>
<comment type="activity regulation">
    <text evidence="4">Inhibited by reagents such as p-chloromercuribenzoate, and by coformycin, a structural analog of inosine.</text>
</comment>
<comment type="biophysicochemical properties">
    <kinetics>
        <KM evidence="4">75 uM for adenosine</KM>
        <KM evidence="4">40 uM for 2'-deoxyadenosine</KM>
    </kinetics>
    <phDependence>
        <text evidence="4">Optimum pH is between 6.9 and 8.5 for both adenosine and 2-deoxyadenosine.</text>
    </phDependence>
</comment>
<comment type="similarity">
    <text evidence="2">Belongs to the metallo-dependent hydrolases superfamily. Adenosine and AMP deaminases family. Adenosine deaminase subfamily.</text>
</comment>
<reference key="1">
    <citation type="journal article" date="1991" name="Biochemistry">
        <title>Deduced amino acid sequence of Escherichia coli adenosine deaminase reveals evolutionarily conserved amino acid residues: implications for catalytic function.</title>
        <authorList>
            <person name="Chang Z."/>
            <person name="Nygaard P."/>
            <person name="Chinault A.C."/>
            <person name="Kellems R.E."/>
        </authorList>
    </citation>
    <scope>NUCLEOTIDE SEQUENCE [GENOMIC DNA]</scope>
    <scope>CATALYTIC ACTIVITY</scope>
    <source>
        <strain>K12</strain>
    </source>
</reference>
<reference key="2">
    <citation type="journal article" date="1996" name="DNA Res.">
        <title>A 570-kb DNA sequence of the Escherichia coli K-12 genome corresponding to the 28.0-40.1 min region on the linkage map.</title>
        <authorList>
            <person name="Aiba H."/>
            <person name="Baba T."/>
            <person name="Fujita K."/>
            <person name="Hayashi K."/>
            <person name="Inada T."/>
            <person name="Isono K."/>
            <person name="Itoh T."/>
            <person name="Kasai H."/>
            <person name="Kashimoto K."/>
            <person name="Kimura S."/>
            <person name="Kitakawa M."/>
            <person name="Kitagawa M."/>
            <person name="Makino K."/>
            <person name="Miki T."/>
            <person name="Mizobuchi K."/>
            <person name="Mori H."/>
            <person name="Mori T."/>
            <person name="Motomura K."/>
            <person name="Nakade S."/>
            <person name="Nakamura Y."/>
            <person name="Nashimoto H."/>
            <person name="Nishio Y."/>
            <person name="Oshima T."/>
            <person name="Saito N."/>
            <person name="Sampei G."/>
            <person name="Seki Y."/>
            <person name="Sivasundaram S."/>
            <person name="Tagami H."/>
            <person name="Takeda J."/>
            <person name="Takemoto K."/>
            <person name="Takeuchi Y."/>
            <person name="Wada C."/>
            <person name="Yamamoto Y."/>
            <person name="Horiuchi T."/>
        </authorList>
    </citation>
    <scope>NUCLEOTIDE SEQUENCE [LARGE SCALE GENOMIC DNA]</scope>
    <source>
        <strain>K12 / W3110 / ATCC 27325 / DSM 5911</strain>
    </source>
</reference>
<reference key="3">
    <citation type="journal article" date="1997" name="Science">
        <title>The complete genome sequence of Escherichia coli K-12.</title>
        <authorList>
            <person name="Blattner F.R."/>
            <person name="Plunkett G. III"/>
            <person name="Bloch C.A."/>
            <person name="Perna N.T."/>
            <person name="Burland V."/>
            <person name="Riley M."/>
            <person name="Collado-Vides J."/>
            <person name="Glasner J.D."/>
            <person name="Rode C.K."/>
            <person name="Mayhew G.F."/>
            <person name="Gregor J."/>
            <person name="Davis N.W."/>
            <person name="Kirkpatrick H.A."/>
            <person name="Goeden M.A."/>
            <person name="Rose D.J."/>
            <person name="Mau B."/>
            <person name="Shao Y."/>
        </authorList>
    </citation>
    <scope>NUCLEOTIDE SEQUENCE [LARGE SCALE GENOMIC DNA]</scope>
    <source>
        <strain>K12 / MG1655 / ATCC 47076</strain>
    </source>
</reference>
<reference key="4">
    <citation type="journal article" date="2006" name="Mol. Syst. Biol.">
        <title>Highly accurate genome sequences of Escherichia coli K-12 strains MG1655 and W3110.</title>
        <authorList>
            <person name="Hayashi K."/>
            <person name="Morooka N."/>
            <person name="Yamamoto Y."/>
            <person name="Fujita K."/>
            <person name="Isono K."/>
            <person name="Choi S."/>
            <person name="Ohtsubo E."/>
            <person name="Baba T."/>
            <person name="Wanner B.L."/>
            <person name="Mori H."/>
            <person name="Horiuchi T."/>
        </authorList>
    </citation>
    <scope>NUCLEOTIDE SEQUENCE [LARGE SCALE GENOMIC DNA]</scope>
    <source>
        <strain>K12 / W3110 / ATCC 27325 / DSM 5911</strain>
    </source>
</reference>
<reference key="5">
    <citation type="journal article" date="1978" name="Methods Enzymol.">
        <title>Adenosine deaminase from Escherichia coli.</title>
        <authorList>
            <person name="Nygaard P."/>
        </authorList>
    </citation>
    <scope>FUNCTION</scope>
    <scope>CATALYTIC ACTIVITY</scope>
    <scope>ACTIVITY REGULATION</scope>
    <scope>BIOPHYSICOCHEMICAL PROPERTIES</scope>
</reference>
<sequence length="333" mass="36397">MIDTTLPLTDIHRHLDGNIRPQTILELGRQYNISLPAQSLETLIPHVQVIANEPDLVSFLTKLDWGVKVLASLDACRRVAFENIEDAARHGLHYVELRFSPGYMAMAHQLPVAGVVEAVIDGVREGCRTFGVQAKLIGIMSRTFGEAACQQELEAFLAHRDQITALDLAGDELGFPGSLFLSHFNRARDAGWHITVHAGEAAGPESIWQAIRELGAERIGHGVKAIEDRALMDFLAEQQIGIESCLTSNIQTSTVAELAAHPLKTFLEHGIRASINTDDPGVQGVDIIHEYTVAAPAAGLSREQIRQAQINGLEMAFLSAEEKRALREKVAAK</sequence>
<dbReference type="EC" id="3.5.4.4" evidence="2 3 4"/>
<dbReference type="EMBL" id="M59033">
    <property type="protein sequence ID" value="AAA23419.1"/>
    <property type="molecule type" value="Genomic_DNA"/>
</dbReference>
<dbReference type="EMBL" id="U00096">
    <property type="protein sequence ID" value="AAC74695.1"/>
    <property type="molecule type" value="Genomic_DNA"/>
</dbReference>
<dbReference type="EMBL" id="AP009048">
    <property type="protein sequence ID" value="BAA15374.1"/>
    <property type="molecule type" value="Genomic_DNA"/>
</dbReference>
<dbReference type="PIR" id="A64919">
    <property type="entry name" value="A64919"/>
</dbReference>
<dbReference type="RefSeq" id="NP_416140.1">
    <property type="nucleotide sequence ID" value="NC_000913.3"/>
</dbReference>
<dbReference type="RefSeq" id="WP_000567490.1">
    <property type="nucleotide sequence ID" value="NZ_SSZK01000001.1"/>
</dbReference>
<dbReference type="SMR" id="P22333"/>
<dbReference type="BioGRID" id="4260251">
    <property type="interactions" value="35"/>
</dbReference>
<dbReference type="DIP" id="DIP-9056N"/>
<dbReference type="FunCoup" id="P22333">
    <property type="interactions" value="710"/>
</dbReference>
<dbReference type="IntAct" id="P22333">
    <property type="interactions" value="15"/>
</dbReference>
<dbReference type="MINT" id="P22333"/>
<dbReference type="STRING" id="511145.b1623"/>
<dbReference type="jPOST" id="P22333"/>
<dbReference type="PaxDb" id="511145-b1623"/>
<dbReference type="EnsemblBacteria" id="AAC74695">
    <property type="protein sequence ID" value="AAC74695"/>
    <property type="gene ID" value="b1623"/>
</dbReference>
<dbReference type="GeneID" id="75204467"/>
<dbReference type="GeneID" id="945851"/>
<dbReference type="KEGG" id="ecj:JW1615"/>
<dbReference type="KEGG" id="eco:b1623"/>
<dbReference type="KEGG" id="ecoc:C3026_09330"/>
<dbReference type="PATRIC" id="fig|1411691.4.peg.638"/>
<dbReference type="EchoBASE" id="EB0029"/>
<dbReference type="eggNOG" id="COG1816">
    <property type="taxonomic scope" value="Bacteria"/>
</dbReference>
<dbReference type="HOGENOM" id="CLU_039228_0_2_6"/>
<dbReference type="InParanoid" id="P22333"/>
<dbReference type="OMA" id="NHFTIHA"/>
<dbReference type="OrthoDB" id="105475at2"/>
<dbReference type="PhylomeDB" id="P22333"/>
<dbReference type="BioCyc" id="EcoCyc:ADENODEAMIN-MONOMER"/>
<dbReference type="BioCyc" id="MetaCyc:ADENODEAMIN-MONOMER"/>
<dbReference type="PRO" id="PR:P22333"/>
<dbReference type="Proteomes" id="UP000000625">
    <property type="component" value="Chromosome"/>
</dbReference>
<dbReference type="GO" id="GO:0005829">
    <property type="term" value="C:cytosol"/>
    <property type="evidence" value="ECO:0000314"/>
    <property type="project" value="EcoCyc"/>
</dbReference>
<dbReference type="GO" id="GO:0046936">
    <property type="term" value="F:2'-deoxyadenosine deaminase activity"/>
    <property type="evidence" value="ECO:0007669"/>
    <property type="project" value="RHEA"/>
</dbReference>
<dbReference type="GO" id="GO:0004000">
    <property type="term" value="F:adenosine deaminase activity"/>
    <property type="evidence" value="ECO:0000314"/>
    <property type="project" value="EcoliWiki"/>
</dbReference>
<dbReference type="GO" id="GO:0008270">
    <property type="term" value="F:zinc ion binding"/>
    <property type="evidence" value="ECO:0007669"/>
    <property type="project" value="UniProtKB-UniRule"/>
</dbReference>
<dbReference type="GO" id="GO:0006154">
    <property type="term" value="P:adenosine catabolic process"/>
    <property type="evidence" value="ECO:0000316"/>
    <property type="project" value="EcoliWiki"/>
</dbReference>
<dbReference type="GO" id="GO:0006974">
    <property type="term" value="P:DNA damage response"/>
    <property type="evidence" value="ECO:0000270"/>
    <property type="project" value="EcoliWiki"/>
</dbReference>
<dbReference type="GO" id="GO:0046101">
    <property type="term" value="P:hypoxanthine biosynthetic process"/>
    <property type="evidence" value="ECO:0000316"/>
    <property type="project" value="EcoliWiki"/>
</dbReference>
<dbReference type="GO" id="GO:0043103">
    <property type="term" value="P:hypoxanthine salvage"/>
    <property type="evidence" value="ECO:0000316"/>
    <property type="project" value="EcoliWiki"/>
</dbReference>
<dbReference type="GO" id="GO:0046103">
    <property type="term" value="P:inosine biosynthetic process"/>
    <property type="evidence" value="ECO:0000318"/>
    <property type="project" value="GO_Central"/>
</dbReference>
<dbReference type="GO" id="GO:0015950">
    <property type="term" value="P:purine nucleotide interconversion"/>
    <property type="evidence" value="ECO:0000316"/>
    <property type="project" value="EcoliWiki"/>
</dbReference>
<dbReference type="GO" id="GO:0032261">
    <property type="term" value="P:purine nucleotide salvage"/>
    <property type="evidence" value="ECO:0000316"/>
    <property type="project" value="EcoliWiki"/>
</dbReference>
<dbReference type="GO" id="GO:0009168">
    <property type="term" value="P:purine ribonucleoside monophosphate biosynthetic process"/>
    <property type="evidence" value="ECO:0000316"/>
    <property type="project" value="EcoliWiki"/>
</dbReference>
<dbReference type="CDD" id="cd01320">
    <property type="entry name" value="ADA"/>
    <property type="match status" value="1"/>
</dbReference>
<dbReference type="FunFam" id="3.20.20.140:FF:000009">
    <property type="entry name" value="Adenosine deaminase"/>
    <property type="match status" value="1"/>
</dbReference>
<dbReference type="Gene3D" id="3.20.20.140">
    <property type="entry name" value="Metal-dependent hydrolases"/>
    <property type="match status" value="1"/>
</dbReference>
<dbReference type="HAMAP" id="MF_00540">
    <property type="entry name" value="A_deaminase"/>
    <property type="match status" value="1"/>
</dbReference>
<dbReference type="InterPro" id="IPR006650">
    <property type="entry name" value="A/AMP_deam_AS"/>
</dbReference>
<dbReference type="InterPro" id="IPR028893">
    <property type="entry name" value="A_deaminase"/>
</dbReference>
<dbReference type="InterPro" id="IPR001365">
    <property type="entry name" value="A_deaminase_dom"/>
</dbReference>
<dbReference type="InterPro" id="IPR006330">
    <property type="entry name" value="Ado/ade_deaminase"/>
</dbReference>
<dbReference type="InterPro" id="IPR032466">
    <property type="entry name" value="Metal_Hydrolase"/>
</dbReference>
<dbReference type="NCBIfam" id="TIGR01430">
    <property type="entry name" value="aden_deam"/>
    <property type="match status" value="1"/>
</dbReference>
<dbReference type="NCBIfam" id="NF006846">
    <property type="entry name" value="PRK09358.1-1"/>
    <property type="match status" value="1"/>
</dbReference>
<dbReference type="PANTHER" id="PTHR11409">
    <property type="entry name" value="ADENOSINE DEAMINASE"/>
    <property type="match status" value="1"/>
</dbReference>
<dbReference type="PANTHER" id="PTHR11409:SF43">
    <property type="entry name" value="ADENOSINE DEAMINASE"/>
    <property type="match status" value="1"/>
</dbReference>
<dbReference type="Pfam" id="PF00962">
    <property type="entry name" value="A_deaminase"/>
    <property type="match status" value="1"/>
</dbReference>
<dbReference type="SUPFAM" id="SSF51556">
    <property type="entry name" value="Metallo-dependent hydrolases"/>
    <property type="match status" value="1"/>
</dbReference>
<dbReference type="PROSITE" id="PS00485">
    <property type="entry name" value="A_DEAMINASE"/>
    <property type="match status" value="1"/>
</dbReference>
<accession>P22333</accession>
<accession>P78163</accession>
<accession>P78240</accession>
<gene>
    <name evidence="2 5" type="primary">add</name>
    <name type="ordered locus">b1623</name>
    <name type="ordered locus">JW1615</name>
</gene>
<protein>
    <recommendedName>
        <fullName evidence="2 6">Adenosine deaminase</fullName>
        <ecNumber evidence="2 3 4">3.5.4.4</ecNumber>
    </recommendedName>
    <alternativeName>
        <fullName evidence="2">Adenosine aminohydrolase</fullName>
    </alternativeName>
</protein>
<keyword id="KW-0378">Hydrolase</keyword>
<keyword id="KW-0479">Metal-binding</keyword>
<keyword id="KW-0546">Nucleotide metabolism</keyword>
<keyword id="KW-1185">Reference proteome</keyword>
<keyword id="KW-0862">Zinc</keyword>
<evidence type="ECO:0000250" key="1">
    <source>
        <dbReference type="UniProtKB" id="P03958"/>
    </source>
</evidence>
<evidence type="ECO:0000255" key="2">
    <source>
        <dbReference type="HAMAP-Rule" id="MF_00540"/>
    </source>
</evidence>
<evidence type="ECO:0000269" key="3">
    <source>
    </source>
</evidence>
<evidence type="ECO:0000269" key="4">
    <source>
    </source>
</evidence>
<evidence type="ECO:0000303" key="5">
    <source>
    </source>
</evidence>
<evidence type="ECO:0000303" key="6">
    <source>
    </source>
</evidence>
<evidence type="ECO:0000305" key="7"/>
<organism>
    <name type="scientific">Escherichia coli (strain K12)</name>
    <dbReference type="NCBI Taxonomy" id="83333"/>
    <lineage>
        <taxon>Bacteria</taxon>
        <taxon>Pseudomonadati</taxon>
        <taxon>Pseudomonadota</taxon>
        <taxon>Gammaproteobacteria</taxon>
        <taxon>Enterobacterales</taxon>
        <taxon>Enterobacteriaceae</taxon>
        <taxon>Escherichia</taxon>
    </lineage>
</organism>
<proteinExistence type="evidence at protein level"/>
<feature type="chain" id="PRO_0000194367" description="Adenosine deaminase">
    <location>
        <begin position="1"/>
        <end position="333"/>
    </location>
</feature>
<feature type="active site" description="Proton donor" evidence="1 2">
    <location>
        <position position="200"/>
    </location>
</feature>
<feature type="binding site" evidence="1 2">
    <location>
        <position position="12"/>
    </location>
    <ligand>
        <name>Zn(2+)</name>
        <dbReference type="ChEBI" id="CHEBI:29105"/>
        <note>catalytic</note>
    </ligand>
</feature>
<feature type="binding site" evidence="1 2">
    <location>
        <position position="14"/>
    </location>
    <ligand>
        <name>substrate</name>
    </ligand>
</feature>
<feature type="binding site" evidence="1 2">
    <location>
        <position position="14"/>
    </location>
    <ligand>
        <name>Zn(2+)</name>
        <dbReference type="ChEBI" id="CHEBI:29105"/>
        <note>catalytic</note>
    </ligand>
</feature>
<feature type="binding site" evidence="1 2">
    <location>
        <position position="16"/>
    </location>
    <ligand>
        <name>substrate</name>
    </ligand>
</feature>
<feature type="binding site" evidence="1 2">
    <location>
        <position position="170"/>
    </location>
    <ligand>
        <name>substrate</name>
    </ligand>
</feature>
<feature type="binding site" evidence="1 2">
    <location>
        <position position="197"/>
    </location>
    <ligand>
        <name>Zn(2+)</name>
        <dbReference type="ChEBI" id="CHEBI:29105"/>
        <note>catalytic</note>
    </ligand>
</feature>
<feature type="binding site" evidence="1 2">
    <location>
        <position position="278"/>
    </location>
    <ligand>
        <name>Zn(2+)</name>
        <dbReference type="ChEBI" id="CHEBI:29105"/>
        <note>catalytic</note>
    </ligand>
</feature>
<feature type="binding site" evidence="1 2">
    <location>
        <position position="279"/>
    </location>
    <ligand>
        <name>substrate</name>
    </ligand>
</feature>
<feature type="site" description="Important for catalytic activity" evidence="1 2">
    <location>
        <position position="221"/>
    </location>
</feature>
<feature type="sequence conflict" description="In Ref. 1; AAA23419." evidence="7" ref="1">
    <location>
        <position position="145"/>
    </location>
</feature>
<name>ADD_ECOLI</name>